<proteinExistence type="predicted"/>
<feature type="chain" id="PRO_0000050267" description="Putative sgc region transcriptional regulator">
    <location>
        <begin position="1"/>
        <end position="260"/>
    </location>
</feature>
<feature type="domain" description="HTH deoR-type" evidence="1">
    <location>
        <begin position="5"/>
        <end position="61"/>
    </location>
</feature>
<feature type="DNA-binding region" description="H-T-H motif" evidence="1">
    <location>
        <begin position="22"/>
        <end position="41"/>
    </location>
</feature>
<dbReference type="EMBL" id="U14003">
    <property type="protein sequence ID" value="AAA97196.1"/>
    <property type="molecule type" value="Genomic_DNA"/>
</dbReference>
<dbReference type="EMBL" id="U00096">
    <property type="protein sequence ID" value="AAC77256.1"/>
    <property type="molecule type" value="Genomic_DNA"/>
</dbReference>
<dbReference type="EMBL" id="AP009048">
    <property type="protein sequence ID" value="BAE78291.1"/>
    <property type="molecule type" value="Genomic_DNA"/>
</dbReference>
<dbReference type="PIR" id="S56525">
    <property type="entry name" value="S56525"/>
</dbReference>
<dbReference type="RefSeq" id="NP_418720.1">
    <property type="nucleotide sequence ID" value="NC_000913.3"/>
</dbReference>
<dbReference type="RefSeq" id="WP_000082780.1">
    <property type="nucleotide sequence ID" value="NZ_SSUV01000012.1"/>
</dbReference>
<dbReference type="SMR" id="P39361"/>
<dbReference type="BioGRID" id="4260977">
    <property type="interactions" value="127"/>
</dbReference>
<dbReference type="DIP" id="DIP-10880N"/>
<dbReference type="FunCoup" id="P39361">
    <property type="interactions" value="31"/>
</dbReference>
<dbReference type="IntAct" id="P39361">
    <property type="interactions" value="1"/>
</dbReference>
<dbReference type="STRING" id="511145.b4300"/>
<dbReference type="PaxDb" id="511145-b4300"/>
<dbReference type="DNASU" id="946830"/>
<dbReference type="EnsemblBacteria" id="AAC77256">
    <property type="protein sequence ID" value="AAC77256"/>
    <property type="gene ID" value="b4300"/>
</dbReference>
<dbReference type="GeneID" id="946830"/>
<dbReference type="KEGG" id="ecj:JW4262"/>
<dbReference type="KEGG" id="eco:b4300"/>
<dbReference type="KEGG" id="ecoc:C3026_23200"/>
<dbReference type="PATRIC" id="fig|1411691.4.peg.2397"/>
<dbReference type="EchoBASE" id="EB2440"/>
<dbReference type="eggNOG" id="COG1349">
    <property type="taxonomic scope" value="Bacteria"/>
</dbReference>
<dbReference type="HOGENOM" id="CLU_060699_0_1_6"/>
<dbReference type="InParanoid" id="P39361"/>
<dbReference type="OMA" id="IKVKSAM"/>
<dbReference type="OrthoDB" id="6846621at2"/>
<dbReference type="PhylomeDB" id="P39361"/>
<dbReference type="BioCyc" id="EcoCyc:G7913-MONOMER"/>
<dbReference type="PRO" id="PR:P39361"/>
<dbReference type="Proteomes" id="UP000000625">
    <property type="component" value="Chromosome"/>
</dbReference>
<dbReference type="GO" id="GO:0000987">
    <property type="term" value="F:cis-regulatory region sequence-specific DNA binding"/>
    <property type="evidence" value="ECO:0000318"/>
    <property type="project" value="GO_Central"/>
</dbReference>
<dbReference type="GO" id="GO:0098531">
    <property type="term" value="F:ligand-modulated transcription factor activity"/>
    <property type="evidence" value="ECO:0000318"/>
    <property type="project" value="GO_Central"/>
</dbReference>
<dbReference type="GO" id="GO:0006355">
    <property type="term" value="P:regulation of DNA-templated transcription"/>
    <property type="evidence" value="ECO:0000318"/>
    <property type="project" value="GO_Central"/>
</dbReference>
<dbReference type="Gene3D" id="1.10.10.10">
    <property type="entry name" value="Winged helix-like DNA-binding domain superfamily/Winged helix DNA-binding domain"/>
    <property type="match status" value="1"/>
</dbReference>
<dbReference type="InterPro" id="IPR050313">
    <property type="entry name" value="Carb_Metab_HTH_regulators"/>
</dbReference>
<dbReference type="InterPro" id="IPR014036">
    <property type="entry name" value="DeoR-like_C"/>
</dbReference>
<dbReference type="InterPro" id="IPR001034">
    <property type="entry name" value="DeoR_HTH"/>
</dbReference>
<dbReference type="InterPro" id="IPR037171">
    <property type="entry name" value="NagB/RpiA_transferase-like"/>
</dbReference>
<dbReference type="InterPro" id="IPR018356">
    <property type="entry name" value="Tscrpt_reg_HTH_DeoR_CS"/>
</dbReference>
<dbReference type="InterPro" id="IPR036388">
    <property type="entry name" value="WH-like_DNA-bd_sf"/>
</dbReference>
<dbReference type="PANTHER" id="PTHR30363">
    <property type="entry name" value="HTH-TYPE TRANSCRIPTIONAL REGULATOR SRLR-RELATED"/>
    <property type="match status" value="1"/>
</dbReference>
<dbReference type="PANTHER" id="PTHR30363:SF24">
    <property type="entry name" value="SGC REGION TRANSCRIPTIONAL REGULATOR-RELATED"/>
    <property type="match status" value="1"/>
</dbReference>
<dbReference type="Pfam" id="PF00455">
    <property type="entry name" value="DeoRC"/>
    <property type="match status" value="1"/>
</dbReference>
<dbReference type="Pfam" id="PF08220">
    <property type="entry name" value="HTH_DeoR"/>
    <property type="match status" value="1"/>
</dbReference>
<dbReference type="SMART" id="SM01134">
    <property type="entry name" value="DeoRC"/>
    <property type="match status" value="1"/>
</dbReference>
<dbReference type="SMART" id="SM00420">
    <property type="entry name" value="HTH_DEOR"/>
    <property type="match status" value="1"/>
</dbReference>
<dbReference type="SUPFAM" id="SSF100950">
    <property type="entry name" value="NagB/RpiA/CoA transferase-like"/>
    <property type="match status" value="1"/>
</dbReference>
<dbReference type="PROSITE" id="PS00894">
    <property type="entry name" value="HTH_DEOR_1"/>
    <property type="match status" value="1"/>
</dbReference>
<dbReference type="PROSITE" id="PS51000">
    <property type="entry name" value="HTH_DEOR_2"/>
    <property type="match status" value="1"/>
</dbReference>
<protein>
    <recommendedName>
        <fullName>Putative sgc region transcriptional regulator</fullName>
    </recommendedName>
</protein>
<gene>
    <name type="primary">sgcR</name>
    <name type="synonym">yjhJ</name>
    <name type="ordered locus">b4300</name>
    <name type="ordered locus">JW4262</name>
</gene>
<evidence type="ECO:0000255" key="1">
    <source>
        <dbReference type="PROSITE-ProRule" id="PRU00349"/>
    </source>
</evidence>
<organism>
    <name type="scientific">Escherichia coli (strain K12)</name>
    <dbReference type="NCBI Taxonomy" id="83333"/>
    <lineage>
        <taxon>Bacteria</taxon>
        <taxon>Pseudomonadati</taxon>
        <taxon>Pseudomonadota</taxon>
        <taxon>Gammaproteobacteria</taxon>
        <taxon>Enterobacterales</taxon>
        <taxon>Enterobacteriaceae</taxon>
        <taxon>Escherichia</taxon>
    </lineage>
</organism>
<reference key="1">
    <citation type="journal article" date="1995" name="Nucleic Acids Res.">
        <title>Analysis of the Escherichia coli genome VI: DNA sequence of the region from 92.8 through 100 minutes.</title>
        <authorList>
            <person name="Burland V.D."/>
            <person name="Plunkett G. III"/>
            <person name="Sofia H.J."/>
            <person name="Daniels D.L."/>
            <person name="Blattner F.R."/>
        </authorList>
    </citation>
    <scope>NUCLEOTIDE SEQUENCE [LARGE SCALE GENOMIC DNA]</scope>
    <source>
        <strain>K12 / MG1655 / ATCC 47076</strain>
    </source>
</reference>
<reference key="2">
    <citation type="journal article" date="1997" name="Science">
        <title>The complete genome sequence of Escherichia coli K-12.</title>
        <authorList>
            <person name="Blattner F.R."/>
            <person name="Plunkett G. III"/>
            <person name="Bloch C.A."/>
            <person name="Perna N.T."/>
            <person name="Burland V."/>
            <person name="Riley M."/>
            <person name="Collado-Vides J."/>
            <person name="Glasner J.D."/>
            <person name="Rode C.K."/>
            <person name="Mayhew G.F."/>
            <person name="Gregor J."/>
            <person name="Davis N.W."/>
            <person name="Kirkpatrick H.A."/>
            <person name="Goeden M.A."/>
            <person name="Rose D.J."/>
            <person name="Mau B."/>
            <person name="Shao Y."/>
        </authorList>
    </citation>
    <scope>NUCLEOTIDE SEQUENCE [LARGE SCALE GENOMIC DNA]</scope>
    <source>
        <strain>K12 / MG1655 / ATCC 47076</strain>
    </source>
</reference>
<reference key="3">
    <citation type="journal article" date="2006" name="Mol. Syst. Biol.">
        <title>Highly accurate genome sequences of Escherichia coli K-12 strains MG1655 and W3110.</title>
        <authorList>
            <person name="Hayashi K."/>
            <person name="Morooka N."/>
            <person name="Yamamoto Y."/>
            <person name="Fujita K."/>
            <person name="Isono K."/>
            <person name="Choi S."/>
            <person name="Ohtsubo E."/>
            <person name="Baba T."/>
            <person name="Wanner B.L."/>
            <person name="Mori H."/>
            <person name="Horiuchi T."/>
        </authorList>
    </citation>
    <scope>NUCLEOTIDE SEQUENCE [LARGE SCALE GENOMIC DNA]</scope>
    <source>
        <strain>K12 / W3110 / ATCC 27325 / DSM 5911</strain>
    </source>
</reference>
<reference key="4">
    <citation type="journal article" date="1996" name="Genome Sci. Technol.">
        <title>Novel phosphotransferases system genes revealed by bacterial genome analysis: operons encoding homologues of sugar-specific permease domains of the phosphotransferase system and pentose catabolic enzymes.</title>
        <authorList>
            <person name="Reizer J."/>
            <person name="Charbit A."/>
            <person name="Reizer A."/>
            <person name="Saier M.H. Jr."/>
        </authorList>
    </citation>
    <scope>DISCUSSION OF SEQUENCE</scope>
</reference>
<name>SGCR_ECOLI</name>
<sequence length="260" mass="29268">MSQQRPDRIKQMLHYLWQHRHLSTQQAMELFGYAEATVRRDFQYIVNQYPGMIRGHGCLDFDDSTDDKEYVFDVKRTLQSVAKREIAALARTMIKDGDCFFLDSGSTCLELAKCLADARVKVICNDIKIANELGCFPHVESYIIGGLIRPGYFSVGESLALEMINAFSVERAFISCDALSLETGITNATMFEVGVKTRIIQRSREVILMADHSKFDAVEPHAVATLSCIKTIISDSGLPETIAQRYQRAGCQLFLPHSIK</sequence>
<keyword id="KW-0238">DNA-binding</keyword>
<keyword id="KW-1185">Reference proteome</keyword>
<keyword id="KW-0804">Transcription</keyword>
<keyword id="KW-0805">Transcription regulation</keyword>
<comment type="function">
    <text>Putative transcriptional regulator for the sgcREAQCX region.</text>
</comment>
<accession>P39361</accession>
<accession>Q2M615</accession>